<dbReference type="SMR" id="Q5DRA8"/>
<dbReference type="FunCoup" id="Q5DRA8">
    <property type="interactions" value="108"/>
</dbReference>
<dbReference type="GlyCosmos" id="Q5DRA8">
    <property type="glycosylation" value="2 sites, No reported glycans"/>
</dbReference>
<dbReference type="PaxDb" id="9598-ENSPTRP00000058450"/>
<dbReference type="eggNOG" id="KOG3594">
    <property type="taxonomic scope" value="Eukaryota"/>
</dbReference>
<dbReference type="InParanoid" id="Q5DRA8"/>
<dbReference type="Proteomes" id="UP000002277">
    <property type="component" value="Unplaced"/>
</dbReference>
<dbReference type="GO" id="GO:0005886">
    <property type="term" value="C:plasma membrane"/>
    <property type="evidence" value="ECO:0000318"/>
    <property type="project" value="GO_Central"/>
</dbReference>
<dbReference type="GO" id="GO:0005509">
    <property type="term" value="F:calcium ion binding"/>
    <property type="evidence" value="ECO:0007669"/>
    <property type="project" value="InterPro"/>
</dbReference>
<dbReference type="GO" id="GO:0007155">
    <property type="term" value="P:cell adhesion"/>
    <property type="evidence" value="ECO:0000318"/>
    <property type="project" value="GO_Central"/>
</dbReference>
<dbReference type="GO" id="GO:0007156">
    <property type="term" value="P:homophilic cell adhesion via plasma membrane adhesion molecules"/>
    <property type="evidence" value="ECO:0007669"/>
    <property type="project" value="InterPro"/>
</dbReference>
<dbReference type="GO" id="GO:0007399">
    <property type="term" value="P:nervous system development"/>
    <property type="evidence" value="ECO:0007669"/>
    <property type="project" value="UniProtKB-ARBA"/>
</dbReference>
<dbReference type="CDD" id="cd11304">
    <property type="entry name" value="Cadherin_repeat"/>
    <property type="match status" value="6"/>
</dbReference>
<dbReference type="FunFam" id="2.60.40.60:FF:000004">
    <property type="entry name" value="Protocadherin 1 gamma 2"/>
    <property type="match status" value="1"/>
</dbReference>
<dbReference type="FunFam" id="2.60.40.60:FF:000001">
    <property type="entry name" value="Protocadherin alpha 2"/>
    <property type="match status" value="1"/>
</dbReference>
<dbReference type="FunFam" id="2.60.40.60:FF:000002">
    <property type="entry name" value="Protocadherin alpha 2"/>
    <property type="match status" value="1"/>
</dbReference>
<dbReference type="FunFam" id="2.60.40.60:FF:000006">
    <property type="entry name" value="Protocadherin alpha 2"/>
    <property type="match status" value="1"/>
</dbReference>
<dbReference type="FunFam" id="2.60.40.60:FF:000129">
    <property type="entry name" value="protocadherin alpha-C2 isoform X1"/>
    <property type="match status" value="1"/>
</dbReference>
<dbReference type="FunFam" id="2.60.40.60:FF:000018">
    <property type="entry name" value="Protocadherin gamma c3"/>
    <property type="match status" value="1"/>
</dbReference>
<dbReference type="Gene3D" id="2.60.40.60">
    <property type="entry name" value="Cadherins"/>
    <property type="match status" value="6"/>
</dbReference>
<dbReference type="InterPro" id="IPR002126">
    <property type="entry name" value="Cadherin-like_dom"/>
</dbReference>
<dbReference type="InterPro" id="IPR015919">
    <property type="entry name" value="Cadherin-like_sf"/>
</dbReference>
<dbReference type="InterPro" id="IPR032455">
    <property type="entry name" value="Cadherin_C"/>
</dbReference>
<dbReference type="InterPro" id="IPR031904">
    <property type="entry name" value="Cadherin_CBD"/>
</dbReference>
<dbReference type="InterPro" id="IPR020894">
    <property type="entry name" value="Cadherin_CS"/>
</dbReference>
<dbReference type="InterPro" id="IPR013164">
    <property type="entry name" value="Cadherin_N"/>
</dbReference>
<dbReference type="InterPro" id="IPR050174">
    <property type="entry name" value="Protocadherin/Cadherin-CA"/>
</dbReference>
<dbReference type="PANTHER" id="PTHR24028">
    <property type="entry name" value="CADHERIN-87A"/>
    <property type="match status" value="1"/>
</dbReference>
<dbReference type="PANTHER" id="PTHR24028:SF117">
    <property type="entry name" value="PROTOCADHERIN GAMMA-B4"/>
    <property type="match status" value="1"/>
</dbReference>
<dbReference type="Pfam" id="PF00028">
    <property type="entry name" value="Cadherin"/>
    <property type="match status" value="5"/>
</dbReference>
<dbReference type="Pfam" id="PF08266">
    <property type="entry name" value="Cadherin_2"/>
    <property type="match status" value="1"/>
</dbReference>
<dbReference type="Pfam" id="PF16492">
    <property type="entry name" value="Cadherin_C_2"/>
    <property type="match status" value="1"/>
</dbReference>
<dbReference type="Pfam" id="PF15974">
    <property type="entry name" value="Cadherin_tail"/>
    <property type="match status" value="1"/>
</dbReference>
<dbReference type="PRINTS" id="PR00205">
    <property type="entry name" value="CADHERIN"/>
</dbReference>
<dbReference type="SMART" id="SM00112">
    <property type="entry name" value="CA"/>
    <property type="match status" value="6"/>
</dbReference>
<dbReference type="SUPFAM" id="SSF49313">
    <property type="entry name" value="Cadherin-like"/>
    <property type="match status" value="6"/>
</dbReference>
<dbReference type="PROSITE" id="PS00232">
    <property type="entry name" value="CADHERIN_1"/>
    <property type="match status" value="5"/>
</dbReference>
<dbReference type="PROSITE" id="PS50268">
    <property type="entry name" value="CADHERIN_2"/>
    <property type="match status" value="6"/>
</dbReference>
<protein>
    <recommendedName>
        <fullName>Protocadherin gamma-B4</fullName>
        <shortName>PCDH-gamma-B4</shortName>
    </recommendedName>
</protein>
<comment type="function">
    <text>Potential calcium-dependent cell-adhesion protein. May be involved in the establishment and maintenance of specific neuronal connections in the brain.</text>
</comment>
<comment type="subcellular location">
    <subcellularLocation>
        <location evidence="1">Cell membrane</location>
        <topology evidence="1">Single-pass type I membrane protein</topology>
    </subcellularLocation>
</comment>
<evidence type="ECO:0000250" key="1"/>
<evidence type="ECO:0000255" key="2"/>
<evidence type="ECO:0000255" key="3">
    <source>
        <dbReference type="PROSITE-ProRule" id="PRU00043"/>
    </source>
</evidence>
<evidence type="ECO:0000256" key="4">
    <source>
        <dbReference type="SAM" id="MobiDB-lite"/>
    </source>
</evidence>
<reference key="1">
    <citation type="journal article" date="2005" name="Nature">
        <title>Initial sequence of the chimpanzee genome and comparison with the human genome.</title>
        <authorList>
            <consortium name="Chimpanzee sequencing and analysis consortium"/>
        </authorList>
    </citation>
    <scope>NUCLEOTIDE SEQUENCE [LARGE SCALE GENOMIC DNA]</scope>
</reference>
<reference key="2">
    <citation type="journal article" date="2005" name="Genetics">
        <title>Comparative genomics and diversifying selection of the clustered vertebrate protocadherin genes.</title>
        <authorList>
            <person name="Wu Q."/>
        </authorList>
    </citation>
    <scope>IDENTIFICATION</scope>
</reference>
<sequence>MGSGAGELGRAERLPVLFLFLLSLFCPALCEQIRYRIPEEMPKGSVVGNLATDLGFSVQELPTRKLRVSSEKPYFTVSAESGELLVSSRLDREEICGKKPACALEFEAVAENPLNFYHVNVEIEDINDHTPKFTQNSFELQISESAQPGTRFILGSAHDADIGSNTLQNYQLSPSDHFSLINKEKSDGSKYPEMVLKTPLDREKQKSYHLTLTALDFGAPPLSSTAQIHVLVTDANDNAPVFSQDIYRVSLSENVYPGTTVLQVTATDQDEGVNAEITFSFSEASQITQFDLNSNTGEITVLNTLDFEEVKEYSIVLEARDGGGMIAQCTVEVEVIDENDNAPEVIFQSLPNLIMEDAELGTHIALLKVRDKDSRHNGEVTCKLEGDVPFKILTSSRNTYKLVTDAVLDREQNPEYNITVTARDRGKPPLSSSSSITLHIGDVNDNAPVFSQSSYIVHVAENNPPGASISQVSASDPDLGPNGQVSYCIIASDLEQRELSSYVSISAESGVVFAQRAFDHEQLRAFELTLQARDQGSPALSANVSLRVLVDDRNDNAPRVLYPALGPDGSALFDMVPRAAEPGYLVTKVVAVDADSGHNAWLSYHVLQASEPGLFSLGLRTGEVRTARALGDRDAVRQRLLVAVRDGGQPPLSATATLHLVFADSLQEVLPDITDRPDPSDLEAELQFYLVVALALISVLFLVAMILAIALRLRRSSSPASWSCFQPGLCVKSESVVPPNYSEGTLPYSYNLCVAHTGKTEFNFLKCNEQLSSGQDILCGDSSGALFPLCNSSELTSHQQAPPNTDWRFSQAQRPGTSGSQNGDDTGTWPNNQFDTEMLQAMILASASEAADGSSTLGGGAGTMGLSARYGPQFTLQHVPDYRQNVYIPGSNATLTNAAGKRDGKAPAGGNGNKKKSGKKEKK</sequence>
<name>PCDGG_PANTR</name>
<organism>
    <name type="scientific">Pan troglodytes</name>
    <name type="common">Chimpanzee</name>
    <dbReference type="NCBI Taxonomy" id="9598"/>
    <lineage>
        <taxon>Eukaryota</taxon>
        <taxon>Metazoa</taxon>
        <taxon>Chordata</taxon>
        <taxon>Craniata</taxon>
        <taxon>Vertebrata</taxon>
        <taxon>Euteleostomi</taxon>
        <taxon>Mammalia</taxon>
        <taxon>Eutheria</taxon>
        <taxon>Euarchontoglires</taxon>
        <taxon>Primates</taxon>
        <taxon>Haplorrhini</taxon>
        <taxon>Catarrhini</taxon>
        <taxon>Hominidae</taxon>
        <taxon>Pan</taxon>
    </lineage>
</organism>
<accession>Q5DRA8</accession>
<keyword id="KW-0106">Calcium</keyword>
<keyword id="KW-0130">Cell adhesion</keyword>
<keyword id="KW-1003">Cell membrane</keyword>
<keyword id="KW-0325">Glycoprotein</keyword>
<keyword id="KW-0472">Membrane</keyword>
<keyword id="KW-1185">Reference proteome</keyword>
<keyword id="KW-0677">Repeat</keyword>
<keyword id="KW-0732">Signal</keyword>
<keyword id="KW-0812">Transmembrane</keyword>
<keyword id="KW-1133">Transmembrane helix</keyword>
<gene>
    <name type="primary">PCDHGB4</name>
</gene>
<proteinExistence type="inferred from homology"/>
<feature type="signal peptide" evidence="2">
    <location>
        <begin position="1"/>
        <end position="30"/>
    </location>
</feature>
<feature type="chain" id="PRO_0000003978" description="Protocadherin gamma-B4">
    <location>
        <begin position="31"/>
        <end position="923"/>
    </location>
</feature>
<feature type="topological domain" description="Extracellular" evidence="2">
    <location>
        <begin position="31"/>
        <end position="689"/>
    </location>
</feature>
<feature type="transmembrane region" description="Helical" evidence="2">
    <location>
        <begin position="690"/>
        <end position="710"/>
    </location>
</feature>
<feature type="topological domain" description="Cytoplasmic" evidence="2">
    <location>
        <begin position="711"/>
        <end position="923"/>
    </location>
</feature>
<feature type="domain" description="Cadherin 1" evidence="3">
    <location>
        <begin position="31"/>
        <end position="133"/>
    </location>
</feature>
<feature type="domain" description="Cadherin 2" evidence="3">
    <location>
        <begin position="134"/>
        <end position="242"/>
    </location>
</feature>
<feature type="domain" description="Cadherin 3" evidence="3">
    <location>
        <begin position="243"/>
        <end position="345"/>
    </location>
</feature>
<feature type="domain" description="Cadherin 4" evidence="3">
    <location>
        <begin position="346"/>
        <end position="450"/>
    </location>
</feature>
<feature type="domain" description="Cadherin 5" evidence="3">
    <location>
        <begin position="451"/>
        <end position="560"/>
    </location>
</feature>
<feature type="domain" description="Cadherin 6" evidence="3">
    <location>
        <begin position="568"/>
        <end position="673"/>
    </location>
</feature>
<feature type="region of interest" description="Disordered" evidence="4">
    <location>
        <begin position="797"/>
        <end position="832"/>
    </location>
</feature>
<feature type="region of interest" description="Disordered" evidence="4">
    <location>
        <begin position="893"/>
        <end position="923"/>
    </location>
</feature>
<feature type="compositionally biased region" description="Basic residues" evidence="4">
    <location>
        <begin position="913"/>
        <end position="923"/>
    </location>
</feature>
<feature type="glycosylation site" description="N-linked (GlcNAc...) asparagine" evidence="2">
    <location>
        <position position="417"/>
    </location>
</feature>
<feature type="glycosylation site" description="N-linked (GlcNAc...) asparagine" evidence="2">
    <location>
        <position position="543"/>
    </location>
</feature>